<reference key="1">
    <citation type="journal article" date="1994" name="Virology">
        <title>The complete DNA sequence of Autographa californica nuclear polyhedrosis virus.</title>
        <authorList>
            <person name="Ayres M.D."/>
            <person name="Howard S.C."/>
            <person name="Kuzio J."/>
            <person name="Lopez-Ferber M."/>
            <person name="Possee R.D."/>
        </authorList>
    </citation>
    <scope>NUCLEOTIDE SEQUENCE [LARGE SCALE GENOMIC DNA]</scope>
    <source>
        <strain>C6</strain>
    </source>
</reference>
<reference key="2">
    <citation type="journal article" date="1994" name="J. Gen. Virol.">
        <title>Nucleotide sequence and genetic organization of a 7.3 kb region (map unit 47 to 52.5) of Autographa californica nuclear polyhedrosis virus fragment EcoRI-C.</title>
        <authorList>
            <person name="Kool M."/>
            <person name="Broer R."/>
            <person name="Zuidema D."/>
            <person name="Goldbach R.W."/>
            <person name="Vlak J.M."/>
        </authorList>
    </citation>
    <scope>NUCLEOTIDE SEQUENCE [GENOMIC DNA]</scope>
    <source>
        <strain>E2</strain>
    </source>
</reference>
<reference key="3">
    <citation type="journal article" date="2016" name="Virus Res.">
        <title>Autographa californica multiple nucleopolyhedrovirus gene ac81 is required for nucleocapsid envelopment.</title>
        <authorList>
            <person name="Dong F."/>
            <person name="Wang J."/>
            <person name="Deng R."/>
            <person name="Wang X."/>
        </authorList>
    </citation>
    <scope>FUNCTION</scope>
    <scope>SUBCELLULAR LOCATION</scope>
</reference>
<name>AC81_NPVAC</name>
<gene>
    <name type="primary">AC81</name>
    <name type="ORF">ORF81</name>
</gene>
<feature type="chain" id="PRO_0000133022" description="Protein AC81">
    <location>
        <begin position="1"/>
        <end position="233"/>
    </location>
</feature>
<feature type="transmembrane region" description="Helical" evidence="1">
    <location>
        <begin position="171"/>
        <end position="191"/>
    </location>
</feature>
<feature type="transmembrane region" description="Helical" evidence="1">
    <location>
        <begin position="194"/>
        <end position="214"/>
    </location>
</feature>
<comment type="function">
    <text evidence="2">Plays an essential role in the assembly of nucleocapsids with envelopes.</text>
</comment>
<comment type="subcellular location">
    <subcellularLocation>
        <location evidence="2">Host nucleus</location>
    </subcellularLocation>
    <subcellularLocation>
        <location>Host membrane</location>
        <topology evidence="1">Multi-pass membrane protein</topology>
    </subcellularLocation>
    <subcellularLocation>
        <location evidence="2">Virion</location>
    </subcellularLocation>
    <text evidence="2">Localizes to the occluded virion (ODV) envelope.</text>
</comment>
<sequence length="233" mass="26920">MTTTERPPPPPLSMSKKETPTLLDSISKKISTTETLQRLRNKNLTTLNKIKYDSELLLHYLYDDHHNKNSDYANNNINVIKISKVKVKKTGASILAHYFAQIHVSTGYSFEFHPGSQPRTFQTIHTDGLIIKVLILCDECCKKELRDYIKGENSFNVAFRNCESILCRRVSFQTVLLTCAILLLLFNVEKFSMINLLIILLILLSLFCHNNYIISNPYIEFCNHKSTNKKYDR</sequence>
<organism>
    <name type="scientific">Autographa californica nuclear polyhedrosis virus</name>
    <name type="common">AcMNPV</name>
    <dbReference type="NCBI Taxonomy" id="46015"/>
    <lineage>
        <taxon>Viruses</taxon>
        <taxon>Viruses incertae sedis</taxon>
        <taxon>Naldaviricetes</taxon>
        <taxon>Lefavirales</taxon>
        <taxon>Baculoviridae</taxon>
        <taxon>Alphabaculovirus</taxon>
        <taxon>Alphabaculovirus aucalifornicae</taxon>
    </lineage>
</organism>
<keyword id="KW-1043">Host membrane</keyword>
<keyword id="KW-1048">Host nucleus</keyword>
<keyword id="KW-0472">Membrane</keyword>
<keyword id="KW-1185">Reference proteome</keyword>
<keyword id="KW-0812">Transmembrane</keyword>
<keyword id="KW-1133">Transmembrane helix</keyword>
<keyword id="KW-0946">Virion</keyword>
<organismHost>
    <name type="scientific">Lepidoptera</name>
    <name type="common">butterflies and moths</name>
    <dbReference type="NCBI Taxonomy" id="7088"/>
</organismHost>
<accession>Q06694</accession>
<proteinExistence type="inferred from homology"/>
<protein>
    <recommendedName>
        <fullName>Protein AC81</fullName>
    </recommendedName>
</protein>
<evidence type="ECO:0000255" key="1"/>
<evidence type="ECO:0000269" key="2">
    <source>
    </source>
</evidence>
<dbReference type="EMBL" id="L22858">
    <property type="protein sequence ID" value="AAA66711.1"/>
    <property type="molecule type" value="Genomic_DNA"/>
</dbReference>
<dbReference type="EMBL" id="X71415">
    <property type="protein sequence ID" value="CAA50544.1"/>
    <property type="molecule type" value="Genomic_DNA"/>
</dbReference>
<dbReference type="PIR" id="B72860">
    <property type="entry name" value="B72860"/>
</dbReference>
<dbReference type="SMR" id="Q06694"/>
<dbReference type="KEGG" id="vg:1403914"/>
<dbReference type="OrthoDB" id="10138at10239"/>
<dbReference type="Proteomes" id="UP000008292">
    <property type="component" value="Segment"/>
</dbReference>
<dbReference type="GO" id="GO:0033644">
    <property type="term" value="C:host cell membrane"/>
    <property type="evidence" value="ECO:0007669"/>
    <property type="project" value="UniProtKB-SubCell"/>
</dbReference>
<dbReference type="GO" id="GO:0042025">
    <property type="term" value="C:host cell nucleus"/>
    <property type="evidence" value="ECO:0007669"/>
    <property type="project" value="UniProtKB-SubCell"/>
</dbReference>
<dbReference type="GO" id="GO:0016020">
    <property type="term" value="C:membrane"/>
    <property type="evidence" value="ECO:0007669"/>
    <property type="project" value="UniProtKB-KW"/>
</dbReference>
<dbReference type="GO" id="GO:0044423">
    <property type="term" value="C:virion component"/>
    <property type="evidence" value="ECO:0007669"/>
    <property type="project" value="UniProtKB-KW"/>
</dbReference>
<dbReference type="InterPro" id="IPR008563">
    <property type="entry name" value="AcMNPV_AC81"/>
</dbReference>
<dbReference type="Pfam" id="PF05820">
    <property type="entry name" value="Ac81"/>
    <property type="match status" value="1"/>
</dbReference>